<keyword id="KW-0067">ATP-binding</keyword>
<keyword id="KW-0436">Ligase</keyword>
<keyword id="KW-0547">Nucleotide-binding</keyword>
<keyword id="KW-0658">Purine biosynthesis</keyword>
<organism>
    <name type="scientific">Histophilus somni (strain 2336)</name>
    <name type="common">Haemophilus somnus</name>
    <dbReference type="NCBI Taxonomy" id="228400"/>
    <lineage>
        <taxon>Bacteria</taxon>
        <taxon>Pseudomonadati</taxon>
        <taxon>Pseudomonadota</taxon>
        <taxon>Gammaproteobacteria</taxon>
        <taxon>Pasteurellales</taxon>
        <taxon>Pasteurellaceae</taxon>
        <taxon>Histophilus</taxon>
    </lineage>
</organism>
<accession>B0UW56</accession>
<gene>
    <name evidence="1" type="primary">purC</name>
    <name type="ordered locus">HSM_0251</name>
</gene>
<evidence type="ECO:0000255" key="1">
    <source>
        <dbReference type="HAMAP-Rule" id="MF_00137"/>
    </source>
</evidence>
<protein>
    <recommendedName>
        <fullName evidence="1">Phosphoribosylaminoimidazole-succinocarboxamide synthase</fullName>
        <ecNumber evidence="1">6.3.2.6</ecNumber>
    </recommendedName>
    <alternativeName>
        <fullName evidence="1">SAICAR synthetase</fullName>
    </alternativeName>
</protein>
<reference key="1">
    <citation type="submission" date="2008-02" db="EMBL/GenBank/DDBJ databases">
        <title>Complete sequence of Haemophilus somnus 2336.</title>
        <authorList>
            <consortium name="US DOE Joint Genome Institute"/>
            <person name="Siddaramappa S."/>
            <person name="Duncan A.J."/>
            <person name="Challacombe J.F."/>
            <person name="Rainey D."/>
            <person name="Gillaspy A.F."/>
            <person name="Carson M."/>
            <person name="Gipson J."/>
            <person name="Gipson M."/>
            <person name="Bruce D."/>
            <person name="Detter J.C."/>
            <person name="Han C.S."/>
            <person name="Land M."/>
            <person name="Tapia R."/>
            <person name="Thompson L.S."/>
            <person name="Orvis J."/>
            <person name="Zaitshik J."/>
            <person name="Barnes G."/>
            <person name="Brettin T.S."/>
            <person name="Dyer D.W."/>
            <person name="Inzana T.J."/>
        </authorList>
    </citation>
    <scope>NUCLEOTIDE SEQUENCE [LARGE SCALE GENOMIC DNA]</scope>
    <source>
        <strain>2336</strain>
    </source>
</reference>
<name>PUR7_HISS2</name>
<proteinExistence type="inferred from homology"/>
<dbReference type="EC" id="6.3.2.6" evidence="1"/>
<dbReference type="EMBL" id="CP000947">
    <property type="protein sequence ID" value="ACA31878.1"/>
    <property type="molecule type" value="Genomic_DNA"/>
</dbReference>
<dbReference type="RefSeq" id="WP_012341123.1">
    <property type="nucleotide sequence ID" value="NC_010519.1"/>
</dbReference>
<dbReference type="SMR" id="B0UW56"/>
<dbReference type="STRING" id="228400.HSM_0251"/>
<dbReference type="GeneID" id="31486531"/>
<dbReference type="KEGG" id="hsm:HSM_0251"/>
<dbReference type="HOGENOM" id="CLU_045637_0_0_6"/>
<dbReference type="UniPathway" id="UPA00074">
    <property type="reaction ID" value="UER00131"/>
</dbReference>
<dbReference type="GO" id="GO:0005737">
    <property type="term" value="C:cytoplasm"/>
    <property type="evidence" value="ECO:0007669"/>
    <property type="project" value="TreeGrafter"/>
</dbReference>
<dbReference type="GO" id="GO:0005524">
    <property type="term" value="F:ATP binding"/>
    <property type="evidence" value="ECO:0007669"/>
    <property type="project" value="UniProtKB-KW"/>
</dbReference>
<dbReference type="GO" id="GO:0004639">
    <property type="term" value="F:phosphoribosylaminoimidazolesuccinocarboxamide synthase activity"/>
    <property type="evidence" value="ECO:0007669"/>
    <property type="project" value="UniProtKB-UniRule"/>
</dbReference>
<dbReference type="GO" id="GO:0006189">
    <property type="term" value="P:'de novo' IMP biosynthetic process"/>
    <property type="evidence" value="ECO:0007669"/>
    <property type="project" value="UniProtKB-UniRule"/>
</dbReference>
<dbReference type="CDD" id="cd01414">
    <property type="entry name" value="SAICAR_synt_Sc"/>
    <property type="match status" value="1"/>
</dbReference>
<dbReference type="FunFam" id="3.30.200.20:FF:000365">
    <property type="entry name" value="Phosphoribosylaminoimidazole-succinocarboxamide synthase"/>
    <property type="match status" value="1"/>
</dbReference>
<dbReference type="FunFam" id="3.30.470.20:FF:000015">
    <property type="entry name" value="Phosphoribosylaminoimidazole-succinocarboxamide synthase"/>
    <property type="match status" value="1"/>
</dbReference>
<dbReference type="Gene3D" id="3.30.470.20">
    <property type="entry name" value="ATP-grasp fold, B domain"/>
    <property type="match status" value="1"/>
</dbReference>
<dbReference type="Gene3D" id="3.30.200.20">
    <property type="entry name" value="Phosphorylase Kinase, domain 1"/>
    <property type="match status" value="1"/>
</dbReference>
<dbReference type="HAMAP" id="MF_00137">
    <property type="entry name" value="SAICAR_synth"/>
    <property type="match status" value="1"/>
</dbReference>
<dbReference type="InterPro" id="IPR028923">
    <property type="entry name" value="SAICAR_synt/ADE2_N"/>
</dbReference>
<dbReference type="InterPro" id="IPR001636">
    <property type="entry name" value="SAICAR_synth"/>
</dbReference>
<dbReference type="InterPro" id="IPR018236">
    <property type="entry name" value="SAICAR_synthetase_CS"/>
</dbReference>
<dbReference type="NCBIfam" id="NF010568">
    <property type="entry name" value="PRK13961.1"/>
    <property type="match status" value="1"/>
</dbReference>
<dbReference type="NCBIfam" id="TIGR00081">
    <property type="entry name" value="purC"/>
    <property type="match status" value="1"/>
</dbReference>
<dbReference type="PANTHER" id="PTHR43700">
    <property type="entry name" value="PHOSPHORIBOSYLAMINOIMIDAZOLE-SUCCINOCARBOXAMIDE SYNTHASE"/>
    <property type="match status" value="1"/>
</dbReference>
<dbReference type="PANTHER" id="PTHR43700:SF1">
    <property type="entry name" value="PHOSPHORIBOSYLAMINOIMIDAZOLE-SUCCINOCARBOXAMIDE SYNTHASE"/>
    <property type="match status" value="1"/>
</dbReference>
<dbReference type="Pfam" id="PF01259">
    <property type="entry name" value="SAICAR_synt"/>
    <property type="match status" value="1"/>
</dbReference>
<dbReference type="SUPFAM" id="SSF56104">
    <property type="entry name" value="SAICAR synthase-like"/>
    <property type="match status" value="1"/>
</dbReference>
<dbReference type="PROSITE" id="PS01057">
    <property type="entry name" value="SAICAR_SYNTHETASE_1"/>
    <property type="match status" value="1"/>
</dbReference>
<dbReference type="PROSITE" id="PS01058">
    <property type="entry name" value="SAICAR_SYNTHETASE_2"/>
    <property type="match status" value="1"/>
</dbReference>
<comment type="catalytic activity">
    <reaction evidence="1">
        <text>5-amino-1-(5-phospho-D-ribosyl)imidazole-4-carboxylate + L-aspartate + ATP = (2S)-2-[5-amino-1-(5-phospho-beta-D-ribosyl)imidazole-4-carboxamido]succinate + ADP + phosphate + 2 H(+)</text>
        <dbReference type="Rhea" id="RHEA:22628"/>
        <dbReference type="ChEBI" id="CHEBI:15378"/>
        <dbReference type="ChEBI" id="CHEBI:29991"/>
        <dbReference type="ChEBI" id="CHEBI:30616"/>
        <dbReference type="ChEBI" id="CHEBI:43474"/>
        <dbReference type="ChEBI" id="CHEBI:58443"/>
        <dbReference type="ChEBI" id="CHEBI:77657"/>
        <dbReference type="ChEBI" id="CHEBI:456216"/>
        <dbReference type="EC" id="6.3.2.6"/>
    </reaction>
</comment>
<comment type="pathway">
    <text evidence="1">Purine metabolism; IMP biosynthesis via de novo pathway; 5-amino-1-(5-phospho-D-ribosyl)imidazole-4-carboxamide from 5-amino-1-(5-phospho-D-ribosyl)imidazole-4-carboxylate: step 1/2.</text>
</comment>
<comment type="similarity">
    <text evidence="1">Belongs to the SAICAR synthetase family.</text>
</comment>
<feature type="chain" id="PRO_1000076456" description="Phosphoribosylaminoimidazole-succinocarboxamide synthase">
    <location>
        <begin position="1"/>
        <end position="286"/>
    </location>
</feature>
<sequence length="286" mass="32271">MTQLSLKKIYSGKVRDLYEIDDKRMLMVATDRLSAFDVILDDPIDRKGEILTQISNFWFKKLAHIMPNHFTGETVYDVLPQAEADLVKDRAVVCKRLTPIKIESIVRGYLTGSGLKDYKATGTICGLKLPEGLVEASKLPEPIFTPSSKAKVGDHDINISYEECEQLIGVELAKQVREKAISLYKEAAEYALTKGIIICDTKFEFGLDENGVLTLMDEVLTPDSSRFWSVETYQEGTNPPSFDKQFVRDWLEKSGWNKQAPAPKVPADVIQKTVDKYKEVLDLLTK</sequence>